<sequence>MSQQVIIFDTTLRDGEQALQASLSVKEKLQIALALERMGVDVMEVGFPVSSPGDFESVQTIARQVKNSRVCALARCVEKDIDVAAESLKVAEAFRIHTFIATSPMHIATKLRSTLDEVIERAIYMVKRARNYTDDVEFSCEDAGRTPIADLARVVEAAINAGATTINIPDTVGYTMPFEFAGIISGLYERVPNIDKAIISVHTHDDLGLAVGNSLAAVHAGARQVEGAMNGIGERAGNCSLEEVIMAIKVRKDILNVHTAINHQEIWRTSQLVSQICNMPIPANKAIVGSGAFAHSSGIHQDGVLKNRENYEIMTPESIGLNQIQLNLTSRSGRAAVKHRMDEMGYKESEYNLDNLYDAFLKLADKKGQVFDYDLEALAFIGKQQEEPEHFRLDYFSVQSGSNDIATAAVKLACGEEVKAEAANGNGPVDAVYQAINRITDYNVELVKYSLTAKGHGKDALGQVDIVANYNGRRFHGVGLATDIVESSAKAMVHVLNNIWRAAEVEKELQRKAQHNENNKETV</sequence>
<keyword id="KW-0028">Amino-acid biosynthesis</keyword>
<keyword id="KW-0100">Branched-chain amino acid biosynthesis</keyword>
<keyword id="KW-0963">Cytoplasm</keyword>
<keyword id="KW-0432">Leucine biosynthesis</keyword>
<keyword id="KW-0464">Manganese</keyword>
<keyword id="KW-0479">Metal-binding</keyword>
<keyword id="KW-0808">Transferase</keyword>
<reference key="1">
    <citation type="journal article" date="2009" name="PLoS Genet.">
        <title>Organised genome dynamics in the Escherichia coli species results in highly diverse adaptive paths.</title>
        <authorList>
            <person name="Touchon M."/>
            <person name="Hoede C."/>
            <person name="Tenaillon O."/>
            <person name="Barbe V."/>
            <person name="Baeriswyl S."/>
            <person name="Bidet P."/>
            <person name="Bingen E."/>
            <person name="Bonacorsi S."/>
            <person name="Bouchier C."/>
            <person name="Bouvet O."/>
            <person name="Calteau A."/>
            <person name="Chiapello H."/>
            <person name="Clermont O."/>
            <person name="Cruveiller S."/>
            <person name="Danchin A."/>
            <person name="Diard M."/>
            <person name="Dossat C."/>
            <person name="Karoui M.E."/>
            <person name="Frapy E."/>
            <person name="Garry L."/>
            <person name="Ghigo J.M."/>
            <person name="Gilles A.M."/>
            <person name="Johnson J."/>
            <person name="Le Bouguenec C."/>
            <person name="Lescat M."/>
            <person name="Mangenot S."/>
            <person name="Martinez-Jehanne V."/>
            <person name="Matic I."/>
            <person name="Nassif X."/>
            <person name="Oztas S."/>
            <person name="Petit M.A."/>
            <person name="Pichon C."/>
            <person name="Rouy Z."/>
            <person name="Ruf C.S."/>
            <person name="Schneider D."/>
            <person name="Tourret J."/>
            <person name="Vacherie B."/>
            <person name="Vallenet D."/>
            <person name="Medigue C."/>
            <person name="Rocha E.P.C."/>
            <person name="Denamur E."/>
        </authorList>
    </citation>
    <scope>NUCLEOTIDE SEQUENCE [LARGE SCALE GENOMIC DNA]</scope>
    <source>
        <strain>IAI1</strain>
    </source>
</reference>
<feature type="chain" id="PRO_1000149189" description="2-isopropylmalate synthase">
    <location>
        <begin position="1"/>
        <end position="523"/>
    </location>
</feature>
<feature type="domain" description="Pyruvate carboxyltransferase" evidence="1">
    <location>
        <begin position="5"/>
        <end position="267"/>
    </location>
</feature>
<feature type="region of interest" description="Regulatory domain" evidence="1">
    <location>
        <begin position="392"/>
        <end position="523"/>
    </location>
</feature>
<feature type="binding site" evidence="1">
    <location>
        <position position="14"/>
    </location>
    <ligand>
        <name>Mn(2+)</name>
        <dbReference type="ChEBI" id="CHEBI:29035"/>
    </ligand>
</feature>
<feature type="binding site" evidence="1">
    <location>
        <position position="202"/>
    </location>
    <ligand>
        <name>Mn(2+)</name>
        <dbReference type="ChEBI" id="CHEBI:29035"/>
    </ligand>
</feature>
<feature type="binding site" evidence="1">
    <location>
        <position position="204"/>
    </location>
    <ligand>
        <name>Mn(2+)</name>
        <dbReference type="ChEBI" id="CHEBI:29035"/>
    </ligand>
</feature>
<feature type="binding site" evidence="1">
    <location>
        <position position="238"/>
    </location>
    <ligand>
        <name>Mn(2+)</name>
        <dbReference type="ChEBI" id="CHEBI:29035"/>
    </ligand>
</feature>
<name>LEU1_ECO8A</name>
<protein>
    <recommendedName>
        <fullName evidence="1">2-isopropylmalate synthase</fullName>
        <ecNumber evidence="1">2.3.3.13</ecNumber>
    </recommendedName>
    <alternativeName>
        <fullName evidence="1">Alpha-IPM synthase</fullName>
    </alternativeName>
    <alternativeName>
        <fullName evidence="1">Alpha-isopropylmalate synthase</fullName>
    </alternativeName>
</protein>
<gene>
    <name evidence="1" type="primary">leuA</name>
    <name type="ordered locus">ECIAI1_0075</name>
</gene>
<comment type="function">
    <text evidence="1">Catalyzes the condensation of the acetyl group of acetyl-CoA with 3-methyl-2-oxobutanoate (2-ketoisovalerate) to form 3-carboxy-3-hydroxy-4-methylpentanoate (2-isopropylmalate).</text>
</comment>
<comment type="catalytic activity">
    <reaction evidence="1">
        <text>3-methyl-2-oxobutanoate + acetyl-CoA + H2O = (2S)-2-isopropylmalate + CoA + H(+)</text>
        <dbReference type="Rhea" id="RHEA:21524"/>
        <dbReference type="ChEBI" id="CHEBI:1178"/>
        <dbReference type="ChEBI" id="CHEBI:11851"/>
        <dbReference type="ChEBI" id="CHEBI:15377"/>
        <dbReference type="ChEBI" id="CHEBI:15378"/>
        <dbReference type="ChEBI" id="CHEBI:57287"/>
        <dbReference type="ChEBI" id="CHEBI:57288"/>
        <dbReference type="EC" id="2.3.3.13"/>
    </reaction>
</comment>
<comment type="cofactor">
    <cofactor evidence="1">
        <name>Mn(2+)</name>
        <dbReference type="ChEBI" id="CHEBI:29035"/>
    </cofactor>
</comment>
<comment type="pathway">
    <text evidence="1">Amino-acid biosynthesis; L-leucine biosynthesis; L-leucine from 3-methyl-2-oxobutanoate: step 1/4.</text>
</comment>
<comment type="subunit">
    <text evidence="1">Homodimer.</text>
</comment>
<comment type="subcellular location">
    <subcellularLocation>
        <location evidence="1">Cytoplasm</location>
    </subcellularLocation>
</comment>
<comment type="similarity">
    <text evidence="1">Belongs to the alpha-IPM synthase/homocitrate synthase family. LeuA type 1 subfamily.</text>
</comment>
<dbReference type="EC" id="2.3.3.13" evidence="1"/>
<dbReference type="EMBL" id="CU928160">
    <property type="protein sequence ID" value="CAQ96965.1"/>
    <property type="molecule type" value="Genomic_DNA"/>
</dbReference>
<dbReference type="RefSeq" id="WP_000082846.1">
    <property type="nucleotide sequence ID" value="NC_011741.1"/>
</dbReference>
<dbReference type="SMR" id="B7M119"/>
<dbReference type="GeneID" id="75202109"/>
<dbReference type="KEGG" id="ecr:ECIAI1_0075"/>
<dbReference type="HOGENOM" id="CLU_022158_0_1_6"/>
<dbReference type="UniPathway" id="UPA00048">
    <property type="reaction ID" value="UER00070"/>
</dbReference>
<dbReference type="GO" id="GO:0005829">
    <property type="term" value="C:cytosol"/>
    <property type="evidence" value="ECO:0007669"/>
    <property type="project" value="TreeGrafter"/>
</dbReference>
<dbReference type="GO" id="GO:0003852">
    <property type="term" value="F:2-isopropylmalate synthase activity"/>
    <property type="evidence" value="ECO:0007669"/>
    <property type="project" value="UniProtKB-UniRule"/>
</dbReference>
<dbReference type="GO" id="GO:0003985">
    <property type="term" value="F:acetyl-CoA C-acetyltransferase activity"/>
    <property type="evidence" value="ECO:0007669"/>
    <property type="project" value="UniProtKB-UniRule"/>
</dbReference>
<dbReference type="GO" id="GO:0030145">
    <property type="term" value="F:manganese ion binding"/>
    <property type="evidence" value="ECO:0007669"/>
    <property type="project" value="UniProtKB-UniRule"/>
</dbReference>
<dbReference type="GO" id="GO:0009098">
    <property type="term" value="P:L-leucine biosynthetic process"/>
    <property type="evidence" value="ECO:0007669"/>
    <property type="project" value="UniProtKB-UniRule"/>
</dbReference>
<dbReference type="CDD" id="cd07940">
    <property type="entry name" value="DRE_TIM_IPMS"/>
    <property type="match status" value="1"/>
</dbReference>
<dbReference type="FunFam" id="1.10.238.260:FF:000001">
    <property type="entry name" value="2-isopropylmalate synthase"/>
    <property type="match status" value="1"/>
</dbReference>
<dbReference type="FunFam" id="3.20.20.70:FF:000010">
    <property type="entry name" value="2-isopropylmalate synthase"/>
    <property type="match status" value="1"/>
</dbReference>
<dbReference type="FunFam" id="3.30.160.270:FF:000001">
    <property type="entry name" value="2-isopropylmalate synthase"/>
    <property type="match status" value="1"/>
</dbReference>
<dbReference type="Gene3D" id="1.10.238.260">
    <property type="match status" value="1"/>
</dbReference>
<dbReference type="Gene3D" id="3.30.160.270">
    <property type="match status" value="1"/>
</dbReference>
<dbReference type="Gene3D" id="3.20.20.70">
    <property type="entry name" value="Aldolase class I"/>
    <property type="match status" value="1"/>
</dbReference>
<dbReference type="HAMAP" id="MF_01025">
    <property type="entry name" value="LeuA_type1"/>
    <property type="match status" value="1"/>
</dbReference>
<dbReference type="InterPro" id="IPR050073">
    <property type="entry name" value="2-IPM_HCS-like"/>
</dbReference>
<dbReference type="InterPro" id="IPR013709">
    <property type="entry name" value="2-isopropylmalate_synth_dimer"/>
</dbReference>
<dbReference type="InterPro" id="IPR002034">
    <property type="entry name" value="AIPM/Hcit_synth_CS"/>
</dbReference>
<dbReference type="InterPro" id="IPR013785">
    <property type="entry name" value="Aldolase_TIM"/>
</dbReference>
<dbReference type="InterPro" id="IPR054691">
    <property type="entry name" value="LeuA/HCS_post-cat"/>
</dbReference>
<dbReference type="InterPro" id="IPR036230">
    <property type="entry name" value="LeuA_allosteric_dom_sf"/>
</dbReference>
<dbReference type="InterPro" id="IPR005671">
    <property type="entry name" value="LeuA_bact_synth"/>
</dbReference>
<dbReference type="InterPro" id="IPR000891">
    <property type="entry name" value="PYR_CT"/>
</dbReference>
<dbReference type="NCBIfam" id="TIGR00973">
    <property type="entry name" value="leuA_bact"/>
    <property type="match status" value="1"/>
</dbReference>
<dbReference type="NCBIfam" id="NF002084">
    <property type="entry name" value="PRK00915.1-1"/>
    <property type="match status" value="1"/>
</dbReference>
<dbReference type="NCBIfam" id="NF002086">
    <property type="entry name" value="PRK00915.1-3"/>
    <property type="match status" value="1"/>
</dbReference>
<dbReference type="PANTHER" id="PTHR10277:SF9">
    <property type="entry name" value="2-ISOPROPYLMALATE SYNTHASE 1, CHLOROPLASTIC-RELATED"/>
    <property type="match status" value="1"/>
</dbReference>
<dbReference type="PANTHER" id="PTHR10277">
    <property type="entry name" value="HOMOCITRATE SYNTHASE-RELATED"/>
    <property type="match status" value="1"/>
</dbReference>
<dbReference type="Pfam" id="PF22617">
    <property type="entry name" value="HCS_D2"/>
    <property type="match status" value="1"/>
</dbReference>
<dbReference type="Pfam" id="PF00682">
    <property type="entry name" value="HMGL-like"/>
    <property type="match status" value="1"/>
</dbReference>
<dbReference type="Pfam" id="PF08502">
    <property type="entry name" value="LeuA_dimer"/>
    <property type="match status" value="1"/>
</dbReference>
<dbReference type="SMART" id="SM00917">
    <property type="entry name" value="LeuA_dimer"/>
    <property type="match status" value="1"/>
</dbReference>
<dbReference type="SUPFAM" id="SSF110921">
    <property type="entry name" value="2-isopropylmalate synthase LeuA, allosteric (dimerisation) domain"/>
    <property type="match status" value="1"/>
</dbReference>
<dbReference type="SUPFAM" id="SSF51569">
    <property type="entry name" value="Aldolase"/>
    <property type="match status" value="1"/>
</dbReference>
<dbReference type="PROSITE" id="PS00815">
    <property type="entry name" value="AIPM_HOMOCIT_SYNTH_1"/>
    <property type="match status" value="1"/>
</dbReference>
<dbReference type="PROSITE" id="PS00816">
    <property type="entry name" value="AIPM_HOMOCIT_SYNTH_2"/>
    <property type="match status" value="1"/>
</dbReference>
<dbReference type="PROSITE" id="PS50991">
    <property type="entry name" value="PYR_CT"/>
    <property type="match status" value="1"/>
</dbReference>
<evidence type="ECO:0000255" key="1">
    <source>
        <dbReference type="HAMAP-Rule" id="MF_01025"/>
    </source>
</evidence>
<organism>
    <name type="scientific">Escherichia coli O8 (strain IAI1)</name>
    <dbReference type="NCBI Taxonomy" id="585034"/>
    <lineage>
        <taxon>Bacteria</taxon>
        <taxon>Pseudomonadati</taxon>
        <taxon>Pseudomonadota</taxon>
        <taxon>Gammaproteobacteria</taxon>
        <taxon>Enterobacterales</taxon>
        <taxon>Enterobacteriaceae</taxon>
        <taxon>Escherichia</taxon>
    </lineage>
</organism>
<proteinExistence type="inferred from homology"/>
<accession>B7M119</accession>